<reference key="1">
    <citation type="journal article" date="2008" name="ISME J.">
        <title>Comparative genomics of two ecotypes of the marine planktonic copiotroph Alteromonas macleodii suggests alternative lifestyles associated with different kinds of particulate organic matter.</title>
        <authorList>
            <person name="Ivars-Martinez E."/>
            <person name="Martin-Cuadrado A.-B."/>
            <person name="D'Auria G."/>
            <person name="Mira A."/>
            <person name="Ferriera S."/>
            <person name="Johnson J."/>
            <person name="Friedman R."/>
            <person name="Rodriguez-Valera F."/>
        </authorList>
    </citation>
    <scope>NUCLEOTIDE SEQUENCE [LARGE SCALE GENOMIC DNA]</scope>
    <source>
        <strain>DSM 17117 / CIP 110805 / LMG 28347 / Deep ecotype</strain>
    </source>
</reference>
<comment type="function">
    <text evidence="1">Catalyzes the condensation of pantoate with beta-alanine in an ATP-dependent reaction via a pantoyl-adenylate intermediate.</text>
</comment>
<comment type="catalytic activity">
    <reaction evidence="1">
        <text>(R)-pantoate + beta-alanine + ATP = (R)-pantothenate + AMP + diphosphate + H(+)</text>
        <dbReference type="Rhea" id="RHEA:10912"/>
        <dbReference type="ChEBI" id="CHEBI:15378"/>
        <dbReference type="ChEBI" id="CHEBI:15980"/>
        <dbReference type="ChEBI" id="CHEBI:29032"/>
        <dbReference type="ChEBI" id="CHEBI:30616"/>
        <dbReference type="ChEBI" id="CHEBI:33019"/>
        <dbReference type="ChEBI" id="CHEBI:57966"/>
        <dbReference type="ChEBI" id="CHEBI:456215"/>
        <dbReference type="EC" id="6.3.2.1"/>
    </reaction>
</comment>
<comment type="pathway">
    <text evidence="1">Cofactor biosynthesis; (R)-pantothenate biosynthesis; (R)-pantothenate from (R)-pantoate and beta-alanine: step 1/1.</text>
</comment>
<comment type="subunit">
    <text evidence="1">Homodimer.</text>
</comment>
<comment type="subcellular location">
    <subcellularLocation>
        <location evidence="1">Cytoplasm</location>
    </subcellularLocation>
</comment>
<comment type="miscellaneous">
    <text evidence="1">The reaction proceeds by a bi uni uni bi ping pong mechanism.</text>
</comment>
<comment type="similarity">
    <text evidence="1">Belongs to the pantothenate synthetase family.</text>
</comment>
<gene>
    <name evidence="1" type="primary">panC1</name>
    <name type="ordered locus">MADE_1017490</name>
</gene>
<gene>
    <name evidence="1" type="primary">panC2</name>
    <name type="ordered locus">MADE_1018445</name>
</gene>
<evidence type="ECO:0000255" key="1">
    <source>
        <dbReference type="HAMAP-Rule" id="MF_00158"/>
    </source>
</evidence>
<feature type="chain" id="PRO_1000097028" description="Pantothenate synthetase">
    <location>
        <begin position="1"/>
        <end position="282"/>
    </location>
</feature>
<feature type="active site" description="Proton donor" evidence="1">
    <location>
        <position position="37"/>
    </location>
</feature>
<feature type="binding site" evidence="1">
    <location>
        <begin position="30"/>
        <end position="37"/>
    </location>
    <ligand>
        <name>ATP</name>
        <dbReference type="ChEBI" id="CHEBI:30616"/>
    </ligand>
</feature>
<feature type="binding site" evidence="1">
    <location>
        <position position="61"/>
    </location>
    <ligand>
        <name>(R)-pantoate</name>
        <dbReference type="ChEBI" id="CHEBI:15980"/>
    </ligand>
</feature>
<feature type="binding site" evidence="1">
    <location>
        <position position="61"/>
    </location>
    <ligand>
        <name>beta-alanine</name>
        <dbReference type="ChEBI" id="CHEBI:57966"/>
    </ligand>
</feature>
<feature type="binding site" evidence="1">
    <location>
        <begin position="149"/>
        <end position="152"/>
    </location>
    <ligand>
        <name>ATP</name>
        <dbReference type="ChEBI" id="CHEBI:30616"/>
    </ligand>
</feature>
<feature type="binding site" evidence="1">
    <location>
        <position position="155"/>
    </location>
    <ligand>
        <name>(R)-pantoate</name>
        <dbReference type="ChEBI" id="CHEBI:15980"/>
    </ligand>
</feature>
<feature type="binding site" evidence="1">
    <location>
        <begin position="186"/>
        <end position="189"/>
    </location>
    <ligand>
        <name>ATP</name>
        <dbReference type="ChEBI" id="CHEBI:30616"/>
    </ligand>
</feature>
<keyword id="KW-0067">ATP-binding</keyword>
<keyword id="KW-0963">Cytoplasm</keyword>
<keyword id="KW-0436">Ligase</keyword>
<keyword id="KW-0547">Nucleotide-binding</keyword>
<keyword id="KW-0566">Pantothenate biosynthesis</keyword>
<name>PANC_ALTMD</name>
<proteinExistence type="inferred from homology"/>
<organism>
    <name type="scientific">Alteromonas mediterranea (strain DSM 17117 / CIP 110805 / LMG 28347 / Deep ecotype)</name>
    <dbReference type="NCBI Taxonomy" id="1774373"/>
    <lineage>
        <taxon>Bacteria</taxon>
        <taxon>Pseudomonadati</taxon>
        <taxon>Pseudomonadota</taxon>
        <taxon>Gammaproteobacteria</taxon>
        <taxon>Alteromonadales</taxon>
        <taxon>Alteromonadaceae</taxon>
        <taxon>Alteromonas/Salinimonas group</taxon>
        <taxon>Alteromonas</taxon>
    </lineage>
</organism>
<dbReference type="EC" id="6.3.2.1" evidence="1"/>
<dbReference type="EMBL" id="CP001103">
    <property type="protein sequence ID" value="AEA99622.1"/>
    <property type="molecule type" value="Genomic_DNA"/>
</dbReference>
<dbReference type="EMBL" id="CP001103">
    <property type="protein sequence ID" value="AEA99813.1"/>
    <property type="molecule type" value="Genomic_DNA"/>
</dbReference>
<dbReference type="SMR" id="B4RYN9"/>
<dbReference type="KEGG" id="amc:MADE_1018445"/>
<dbReference type="HOGENOM" id="CLU_047148_0_0_6"/>
<dbReference type="UniPathway" id="UPA00028">
    <property type="reaction ID" value="UER00005"/>
</dbReference>
<dbReference type="Proteomes" id="UP000001870">
    <property type="component" value="Chromosome"/>
</dbReference>
<dbReference type="GO" id="GO:0005829">
    <property type="term" value="C:cytosol"/>
    <property type="evidence" value="ECO:0007669"/>
    <property type="project" value="TreeGrafter"/>
</dbReference>
<dbReference type="GO" id="GO:0005524">
    <property type="term" value="F:ATP binding"/>
    <property type="evidence" value="ECO:0007669"/>
    <property type="project" value="UniProtKB-KW"/>
</dbReference>
<dbReference type="GO" id="GO:0004592">
    <property type="term" value="F:pantoate-beta-alanine ligase activity"/>
    <property type="evidence" value="ECO:0007669"/>
    <property type="project" value="UniProtKB-UniRule"/>
</dbReference>
<dbReference type="GO" id="GO:0015940">
    <property type="term" value="P:pantothenate biosynthetic process"/>
    <property type="evidence" value="ECO:0007669"/>
    <property type="project" value="UniProtKB-UniRule"/>
</dbReference>
<dbReference type="CDD" id="cd00560">
    <property type="entry name" value="PanC"/>
    <property type="match status" value="1"/>
</dbReference>
<dbReference type="FunFam" id="3.30.1300.10:FF:000001">
    <property type="entry name" value="Pantothenate synthetase"/>
    <property type="match status" value="1"/>
</dbReference>
<dbReference type="FunFam" id="3.40.50.620:FF:000013">
    <property type="entry name" value="Pantothenate synthetase"/>
    <property type="match status" value="1"/>
</dbReference>
<dbReference type="Gene3D" id="3.40.50.620">
    <property type="entry name" value="HUPs"/>
    <property type="match status" value="1"/>
</dbReference>
<dbReference type="Gene3D" id="3.30.1300.10">
    <property type="entry name" value="Pantoate-beta-alanine ligase, C-terminal domain"/>
    <property type="match status" value="1"/>
</dbReference>
<dbReference type="HAMAP" id="MF_00158">
    <property type="entry name" value="PanC"/>
    <property type="match status" value="1"/>
</dbReference>
<dbReference type="InterPro" id="IPR004821">
    <property type="entry name" value="Cyt_trans-like"/>
</dbReference>
<dbReference type="InterPro" id="IPR003721">
    <property type="entry name" value="Pantoate_ligase"/>
</dbReference>
<dbReference type="InterPro" id="IPR042176">
    <property type="entry name" value="Pantoate_ligase_C"/>
</dbReference>
<dbReference type="InterPro" id="IPR014729">
    <property type="entry name" value="Rossmann-like_a/b/a_fold"/>
</dbReference>
<dbReference type="NCBIfam" id="TIGR00125">
    <property type="entry name" value="cyt_tran_rel"/>
    <property type="match status" value="1"/>
</dbReference>
<dbReference type="NCBIfam" id="TIGR00018">
    <property type="entry name" value="panC"/>
    <property type="match status" value="1"/>
</dbReference>
<dbReference type="PANTHER" id="PTHR21299">
    <property type="entry name" value="CYTIDYLATE KINASE/PANTOATE-BETA-ALANINE LIGASE"/>
    <property type="match status" value="1"/>
</dbReference>
<dbReference type="PANTHER" id="PTHR21299:SF1">
    <property type="entry name" value="PANTOATE--BETA-ALANINE LIGASE"/>
    <property type="match status" value="1"/>
</dbReference>
<dbReference type="Pfam" id="PF02569">
    <property type="entry name" value="Pantoate_ligase"/>
    <property type="match status" value="1"/>
</dbReference>
<dbReference type="SUPFAM" id="SSF52374">
    <property type="entry name" value="Nucleotidylyl transferase"/>
    <property type="match status" value="1"/>
</dbReference>
<sequence length="282" mass="30833">MKVIDSISTLRQTVNAWRRNGESVGFVPTMGNLHDGHLKLVKKAKAHNDNVVVSIFVNPMQFGANEDLDAYPRTIEEDKAKLISVGADAVFLPSVAEMYPAGLDAQTFVEVPGISDSHCGASRPGHFRGVATVVTKLFNMVQPDDAFFGEKDFQQLQVIRALARDLSMAVTIHGVPTEREASGLAMSSRNGYLSKEEKATASAIYEEMQRVKAGIEGGNIDFSELEDAMVTNLEAKGFKKDYCQVVNASTFKAATANDKELVLLVAMFMGKTRLIDNLQITR</sequence>
<protein>
    <recommendedName>
        <fullName evidence="1">Pantothenate synthetase</fullName>
        <shortName evidence="1">PS</shortName>
        <ecNumber evidence="1">6.3.2.1</ecNumber>
    </recommendedName>
    <alternativeName>
        <fullName evidence="1">Pantoate--beta-alanine ligase</fullName>
    </alternativeName>
    <alternativeName>
        <fullName evidence="1">Pantoate-activating enzyme</fullName>
    </alternativeName>
</protein>
<accession>B4RYN9</accession>
<accession>F2G683</accession>